<name>MTIP_XYLFT</name>
<evidence type="ECO:0000255" key="1">
    <source>
        <dbReference type="HAMAP-Rule" id="MF_01963"/>
    </source>
</evidence>
<sequence>MQTIALAVIGGTGVYTLSQFDDVQVYEVETLYGRPSGPIRVGMLFGQRVAFFARHGEEHALPPHKINYRANIAALQQLGVSRVLALNTVGGINEAFGPRTLVCPDQLIDYTWGRVSTFCEEVGSEVLHVDFGHPYSPLLRGCLLRAARDVDVSLVEYGCYGVTQGPRLETIAEIDRLRRDGCDLVGMTGMPEAALAREKGLEYACLGIVSNWAAGCGDGAEITMGEILSNVATAFSCLPELISKVARE</sequence>
<organism>
    <name type="scientific">Xylella fastidiosa (strain Temecula1 / ATCC 700964)</name>
    <dbReference type="NCBI Taxonomy" id="183190"/>
    <lineage>
        <taxon>Bacteria</taxon>
        <taxon>Pseudomonadati</taxon>
        <taxon>Pseudomonadota</taxon>
        <taxon>Gammaproteobacteria</taxon>
        <taxon>Lysobacterales</taxon>
        <taxon>Lysobacteraceae</taxon>
        <taxon>Xylella</taxon>
    </lineage>
</organism>
<reference key="1">
    <citation type="journal article" date="2003" name="J. Bacteriol.">
        <title>Comparative analyses of the complete genome sequences of Pierce's disease and citrus variegated chlorosis strains of Xylella fastidiosa.</title>
        <authorList>
            <person name="Van Sluys M.A."/>
            <person name="de Oliveira M.C."/>
            <person name="Monteiro-Vitorello C.B."/>
            <person name="Miyaki C.Y."/>
            <person name="Furlan L.R."/>
            <person name="Camargo L.E.A."/>
            <person name="da Silva A.C.R."/>
            <person name="Moon D.H."/>
            <person name="Takita M.A."/>
            <person name="Lemos E.G.M."/>
            <person name="Machado M.A."/>
            <person name="Ferro M.I.T."/>
            <person name="da Silva F.R."/>
            <person name="Goldman M.H.S."/>
            <person name="Goldman G.H."/>
            <person name="Lemos M.V.F."/>
            <person name="El-Dorry H."/>
            <person name="Tsai S.M."/>
            <person name="Carrer H."/>
            <person name="Carraro D.M."/>
            <person name="de Oliveira R.C."/>
            <person name="Nunes L.R."/>
            <person name="Siqueira W.J."/>
            <person name="Coutinho L.L."/>
            <person name="Kimura E.T."/>
            <person name="Ferro E.S."/>
            <person name="Harakava R."/>
            <person name="Kuramae E.E."/>
            <person name="Marino C.L."/>
            <person name="Giglioti E."/>
            <person name="Abreu I.L."/>
            <person name="Alves L.M.C."/>
            <person name="do Amaral A.M."/>
            <person name="Baia G.S."/>
            <person name="Blanco S.R."/>
            <person name="Brito M.S."/>
            <person name="Cannavan F.S."/>
            <person name="Celestino A.V."/>
            <person name="da Cunha A.F."/>
            <person name="Fenille R.C."/>
            <person name="Ferro J.A."/>
            <person name="Formighieri E.F."/>
            <person name="Kishi L.T."/>
            <person name="Leoni S.G."/>
            <person name="Oliveira A.R."/>
            <person name="Rosa V.E. Jr."/>
            <person name="Sassaki F.T."/>
            <person name="Sena J.A.D."/>
            <person name="de Souza A.A."/>
            <person name="Truffi D."/>
            <person name="Tsukumo F."/>
            <person name="Yanai G.M."/>
            <person name="Zaros L.G."/>
            <person name="Civerolo E.L."/>
            <person name="Simpson A.J.G."/>
            <person name="Almeida N.F. Jr."/>
            <person name="Setubal J.C."/>
            <person name="Kitajima J.P."/>
        </authorList>
    </citation>
    <scope>NUCLEOTIDE SEQUENCE [LARGE SCALE GENOMIC DNA]</scope>
    <source>
        <strain>Temecula1 / ATCC 700964</strain>
    </source>
</reference>
<feature type="chain" id="PRO_0000184554" description="Probable S-methyl-5'-thioinosine phosphorylase">
    <location>
        <begin position="1"/>
        <end position="248"/>
    </location>
</feature>
<feature type="binding site" evidence="1">
    <location>
        <position position="12"/>
    </location>
    <ligand>
        <name>phosphate</name>
        <dbReference type="ChEBI" id="CHEBI:43474"/>
    </ligand>
</feature>
<feature type="binding site" evidence="1">
    <location>
        <begin position="54"/>
        <end position="55"/>
    </location>
    <ligand>
        <name>phosphate</name>
        <dbReference type="ChEBI" id="CHEBI:43474"/>
    </ligand>
</feature>
<feature type="binding site" evidence="1">
    <location>
        <position position="187"/>
    </location>
    <ligand>
        <name>substrate</name>
    </ligand>
</feature>
<feature type="binding site" evidence="1">
    <location>
        <position position="188"/>
    </location>
    <ligand>
        <name>phosphate</name>
        <dbReference type="ChEBI" id="CHEBI:43474"/>
    </ligand>
</feature>
<feature type="binding site" evidence="1">
    <location>
        <begin position="211"/>
        <end position="213"/>
    </location>
    <ligand>
        <name>substrate</name>
    </ligand>
</feature>
<feature type="site" description="Important for substrate specificity" evidence="1">
    <location>
        <position position="169"/>
    </location>
</feature>
<feature type="site" description="Important for substrate specificity" evidence="1">
    <location>
        <position position="224"/>
    </location>
</feature>
<protein>
    <recommendedName>
        <fullName evidence="1">Probable S-methyl-5'-thioinosine phosphorylase</fullName>
        <ecNumber evidence="1">2.4.2.44</ecNumber>
    </recommendedName>
    <alternativeName>
        <fullName evidence="1">5'-methylthioinosine phosphorylase</fullName>
        <shortName evidence="1">MTI phosphorylase</shortName>
        <shortName evidence="1">MTIP</shortName>
    </alternativeName>
</protein>
<proteinExistence type="inferred from homology"/>
<comment type="function">
    <text evidence="1">Catalyzes the reversible phosphorylation of S-methyl-5'-thioinosine (MTI) to hypoxanthine and 5-methylthioribose-1-phosphate. Involved in the breakdown of S-methyl-5'-thioadenosine (MTA), a major by-product of polyamine biosynthesis. Catabolism of (MTA) occurs via deamination to MTI and phosphorolysis to hypoxanthine.</text>
</comment>
<comment type="catalytic activity">
    <reaction evidence="1">
        <text>S-methyl-5'-thioinosine + phosphate = 5-(methylsulfanyl)-alpha-D-ribose 1-phosphate + hypoxanthine</text>
        <dbReference type="Rhea" id="RHEA:30643"/>
        <dbReference type="ChEBI" id="CHEBI:17368"/>
        <dbReference type="ChEBI" id="CHEBI:43474"/>
        <dbReference type="ChEBI" id="CHEBI:48595"/>
        <dbReference type="ChEBI" id="CHEBI:58533"/>
        <dbReference type="EC" id="2.4.2.44"/>
    </reaction>
</comment>
<comment type="pathway">
    <text evidence="1">Purine metabolism; purine nucleoside salvage.</text>
</comment>
<comment type="subunit">
    <text evidence="1">Homotrimer.</text>
</comment>
<comment type="miscellaneous">
    <text evidence="1">Although this enzyme belongs to the family of MTA phosphorylases based on sequence homology, it has been shown that conserved amino acid substitutions in the substrate binding pocket convert the substrate specificity of this enzyme from 6-aminopurines to 6-oxopurines.</text>
</comment>
<comment type="similarity">
    <text evidence="1">Belongs to the PNP/MTAP phosphorylase family. MTAP subfamily.</text>
</comment>
<gene>
    <name evidence="1" type="primary">mtnP</name>
    <name type="ordered locus">PD_1381</name>
</gene>
<keyword id="KW-0328">Glycosyltransferase</keyword>
<keyword id="KW-0660">Purine salvage</keyword>
<keyword id="KW-1185">Reference proteome</keyword>
<keyword id="KW-0808">Transferase</keyword>
<dbReference type="EC" id="2.4.2.44" evidence="1"/>
<dbReference type="EMBL" id="AE009442">
    <property type="protein sequence ID" value="AAO29228.1"/>
    <property type="molecule type" value="Genomic_DNA"/>
</dbReference>
<dbReference type="RefSeq" id="WP_004091032.1">
    <property type="nucleotide sequence ID" value="NC_004556.1"/>
</dbReference>
<dbReference type="SMR" id="Q87BR7"/>
<dbReference type="KEGG" id="xft:PD_1381"/>
<dbReference type="HOGENOM" id="CLU_054456_0_2_6"/>
<dbReference type="UniPathway" id="UPA00606"/>
<dbReference type="Proteomes" id="UP000002516">
    <property type="component" value="Chromosome"/>
</dbReference>
<dbReference type="GO" id="GO:0005829">
    <property type="term" value="C:cytosol"/>
    <property type="evidence" value="ECO:0007669"/>
    <property type="project" value="TreeGrafter"/>
</dbReference>
<dbReference type="GO" id="GO:0017061">
    <property type="term" value="F:S-methyl-5-thioadenosine phosphorylase activity"/>
    <property type="evidence" value="ECO:0007669"/>
    <property type="project" value="InterPro"/>
</dbReference>
<dbReference type="GO" id="GO:0019509">
    <property type="term" value="P:L-methionine salvage from methylthioadenosine"/>
    <property type="evidence" value="ECO:0007669"/>
    <property type="project" value="TreeGrafter"/>
</dbReference>
<dbReference type="GO" id="GO:0006166">
    <property type="term" value="P:purine ribonucleoside salvage"/>
    <property type="evidence" value="ECO:0007669"/>
    <property type="project" value="UniProtKB-UniRule"/>
</dbReference>
<dbReference type="CDD" id="cd09010">
    <property type="entry name" value="MTAP_SsMTAPII_like_MTIP"/>
    <property type="match status" value="1"/>
</dbReference>
<dbReference type="Gene3D" id="3.40.50.1580">
    <property type="entry name" value="Nucleoside phosphorylase domain"/>
    <property type="match status" value="1"/>
</dbReference>
<dbReference type="HAMAP" id="MF_01963">
    <property type="entry name" value="MTAP"/>
    <property type="match status" value="1"/>
</dbReference>
<dbReference type="InterPro" id="IPR010044">
    <property type="entry name" value="MTAP"/>
</dbReference>
<dbReference type="InterPro" id="IPR000845">
    <property type="entry name" value="Nucleoside_phosphorylase_d"/>
</dbReference>
<dbReference type="InterPro" id="IPR035994">
    <property type="entry name" value="Nucleoside_phosphorylase_sf"/>
</dbReference>
<dbReference type="InterPro" id="IPR018099">
    <property type="entry name" value="Purine_phosphorylase-2_CS"/>
</dbReference>
<dbReference type="NCBIfam" id="NF006599">
    <property type="entry name" value="PRK09136.1"/>
    <property type="match status" value="1"/>
</dbReference>
<dbReference type="PANTHER" id="PTHR42679">
    <property type="entry name" value="S-METHYL-5'-THIOADENOSINE PHOSPHORYLASE"/>
    <property type="match status" value="1"/>
</dbReference>
<dbReference type="PANTHER" id="PTHR42679:SF2">
    <property type="entry name" value="S-METHYL-5'-THIOADENOSINE PHOSPHORYLASE"/>
    <property type="match status" value="1"/>
</dbReference>
<dbReference type="Pfam" id="PF01048">
    <property type="entry name" value="PNP_UDP_1"/>
    <property type="match status" value="1"/>
</dbReference>
<dbReference type="SUPFAM" id="SSF53167">
    <property type="entry name" value="Purine and uridine phosphorylases"/>
    <property type="match status" value="1"/>
</dbReference>
<dbReference type="PROSITE" id="PS01240">
    <property type="entry name" value="PNP_MTAP_2"/>
    <property type="match status" value="1"/>
</dbReference>
<accession>Q87BR7</accession>